<accession>A7FFZ6</accession>
<organism>
    <name type="scientific">Yersinia pseudotuberculosis serotype O:1b (strain IP 31758)</name>
    <dbReference type="NCBI Taxonomy" id="349747"/>
    <lineage>
        <taxon>Bacteria</taxon>
        <taxon>Pseudomonadati</taxon>
        <taxon>Pseudomonadota</taxon>
        <taxon>Gammaproteobacteria</taxon>
        <taxon>Enterobacterales</taxon>
        <taxon>Yersiniaceae</taxon>
        <taxon>Yersinia</taxon>
    </lineage>
</organism>
<dbReference type="EC" id="3.1.11.6" evidence="1"/>
<dbReference type="EMBL" id="CP000720">
    <property type="protein sequence ID" value="ABS48355.1"/>
    <property type="molecule type" value="Genomic_DNA"/>
</dbReference>
<dbReference type="RefSeq" id="WP_012104810.1">
    <property type="nucleotide sequence ID" value="NC_009708.1"/>
</dbReference>
<dbReference type="SMR" id="A7FFZ6"/>
<dbReference type="KEGG" id="ypi:YpsIP31758_1193"/>
<dbReference type="HOGENOM" id="CLU_023625_3_1_6"/>
<dbReference type="Proteomes" id="UP000002412">
    <property type="component" value="Chromosome"/>
</dbReference>
<dbReference type="GO" id="GO:0005737">
    <property type="term" value="C:cytoplasm"/>
    <property type="evidence" value="ECO:0007669"/>
    <property type="project" value="UniProtKB-SubCell"/>
</dbReference>
<dbReference type="GO" id="GO:0009318">
    <property type="term" value="C:exodeoxyribonuclease VII complex"/>
    <property type="evidence" value="ECO:0007669"/>
    <property type="project" value="InterPro"/>
</dbReference>
<dbReference type="GO" id="GO:0008855">
    <property type="term" value="F:exodeoxyribonuclease VII activity"/>
    <property type="evidence" value="ECO:0007669"/>
    <property type="project" value="UniProtKB-UniRule"/>
</dbReference>
<dbReference type="GO" id="GO:0003676">
    <property type="term" value="F:nucleic acid binding"/>
    <property type="evidence" value="ECO:0007669"/>
    <property type="project" value="InterPro"/>
</dbReference>
<dbReference type="GO" id="GO:0006308">
    <property type="term" value="P:DNA catabolic process"/>
    <property type="evidence" value="ECO:0007669"/>
    <property type="project" value="UniProtKB-UniRule"/>
</dbReference>
<dbReference type="CDD" id="cd04489">
    <property type="entry name" value="ExoVII_LU_OBF"/>
    <property type="match status" value="1"/>
</dbReference>
<dbReference type="HAMAP" id="MF_00378">
    <property type="entry name" value="Exonuc_7_L"/>
    <property type="match status" value="1"/>
</dbReference>
<dbReference type="InterPro" id="IPR003753">
    <property type="entry name" value="Exonuc_VII_L"/>
</dbReference>
<dbReference type="InterPro" id="IPR020579">
    <property type="entry name" value="Exonuc_VII_lsu_C"/>
</dbReference>
<dbReference type="InterPro" id="IPR025824">
    <property type="entry name" value="OB-fold_nuc-bd_dom"/>
</dbReference>
<dbReference type="NCBIfam" id="TIGR00237">
    <property type="entry name" value="xseA"/>
    <property type="match status" value="1"/>
</dbReference>
<dbReference type="PANTHER" id="PTHR30008">
    <property type="entry name" value="EXODEOXYRIBONUCLEASE 7 LARGE SUBUNIT"/>
    <property type="match status" value="1"/>
</dbReference>
<dbReference type="PANTHER" id="PTHR30008:SF0">
    <property type="entry name" value="EXODEOXYRIBONUCLEASE 7 LARGE SUBUNIT"/>
    <property type="match status" value="1"/>
</dbReference>
<dbReference type="Pfam" id="PF02601">
    <property type="entry name" value="Exonuc_VII_L"/>
    <property type="match status" value="1"/>
</dbReference>
<dbReference type="Pfam" id="PF13742">
    <property type="entry name" value="tRNA_anti_2"/>
    <property type="match status" value="1"/>
</dbReference>
<keyword id="KW-0963">Cytoplasm</keyword>
<keyword id="KW-0269">Exonuclease</keyword>
<keyword id="KW-0378">Hydrolase</keyword>
<keyword id="KW-0540">Nuclease</keyword>
<gene>
    <name evidence="1" type="primary">xseA</name>
    <name type="ordered locus">YpsIP31758_1193</name>
</gene>
<sequence>MSQSSASSIFTVSRLNQTVRELLEREMGQIWLTAEISNFSQPASGHWYFTLKDDRAQVRCAMFRNSNRRTTFRPQNGQQVLVRASITLYEPRGDYQLIAESMQPAGDGLLQQQFEQLKQQLAAEGLFDQSHKQPLPRPAKQVGVITSASGAALHDVLHVLQRRDPSLPVIIYPTSVQGVDAPLQIVRAIQLANLRAECDVLIVGRGGGSLEDLWSFNDERVARAIFNSHIPIVSAVGHETDVTIADFVADLRAPTPSAAAELVSRNQIELVRQIQGQQQRMEMAMDYYLAQRNQQFTRLEHRLQQQHPHLRLARQQTLLLKLQRRLEESAQTQIRLLSKRTERLQQRLQQVQPQGQIHRYNQRVQQQEYRLRQAVERQLNGYRQRFGIACSQLEAVSPLATLARGYSVTQTPAGALLKTTKQVQAGDKLTTRLQDGWVESEITQVTVAKKSRQKKVVT</sequence>
<protein>
    <recommendedName>
        <fullName evidence="1">Exodeoxyribonuclease 7 large subunit</fullName>
        <ecNumber evidence="1">3.1.11.6</ecNumber>
    </recommendedName>
    <alternativeName>
        <fullName evidence="1">Exodeoxyribonuclease VII large subunit</fullName>
        <shortName evidence="1">Exonuclease VII large subunit</shortName>
    </alternativeName>
</protein>
<name>EX7L_YERP3</name>
<comment type="function">
    <text evidence="1">Bidirectionally degrades single-stranded DNA into large acid-insoluble oligonucleotides, which are then degraded further into small acid-soluble oligonucleotides.</text>
</comment>
<comment type="catalytic activity">
    <reaction evidence="1">
        <text>Exonucleolytic cleavage in either 5'- to 3'- or 3'- to 5'-direction to yield nucleoside 5'-phosphates.</text>
        <dbReference type="EC" id="3.1.11.6"/>
    </reaction>
</comment>
<comment type="subunit">
    <text evidence="1">Heterooligomer composed of large and small subunits.</text>
</comment>
<comment type="subcellular location">
    <subcellularLocation>
        <location evidence="1">Cytoplasm</location>
    </subcellularLocation>
</comment>
<comment type="similarity">
    <text evidence="1">Belongs to the XseA family.</text>
</comment>
<reference key="1">
    <citation type="journal article" date="2007" name="PLoS Genet.">
        <title>The complete genome sequence of Yersinia pseudotuberculosis IP31758, the causative agent of Far East scarlet-like fever.</title>
        <authorList>
            <person name="Eppinger M."/>
            <person name="Rosovitz M.J."/>
            <person name="Fricke W.F."/>
            <person name="Rasko D.A."/>
            <person name="Kokorina G."/>
            <person name="Fayolle C."/>
            <person name="Lindler L.E."/>
            <person name="Carniel E."/>
            <person name="Ravel J."/>
        </authorList>
    </citation>
    <scope>NUCLEOTIDE SEQUENCE [LARGE SCALE GENOMIC DNA]</scope>
    <source>
        <strain>IP 31758</strain>
    </source>
</reference>
<feature type="chain" id="PRO_1000060032" description="Exodeoxyribonuclease 7 large subunit">
    <location>
        <begin position="1"/>
        <end position="458"/>
    </location>
</feature>
<proteinExistence type="inferred from homology"/>
<evidence type="ECO:0000255" key="1">
    <source>
        <dbReference type="HAMAP-Rule" id="MF_00378"/>
    </source>
</evidence>